<keyword id="KW-0687">Ribonucleoprotein</keyword>
<keyword id="KW-0689">Ribosomal protein</keyword>
<keyword id="KW-0694">RNA-binding</keyword>
<keyword id="KW-0699">rRNA-binding</keyword>
<sequence length="207" mass="23366">MARYIGPKCKLSRREGTDLFLKSARRSLDSKCKLDSKPGQHGRTSGARTSDYGLQLREKQKLKRMYGVLEKQFRKYFVEAERRRGNTGETLIQLLESRLDNVVYRMGFGSTRAEARQLVSHRAIELNGHTADIASMLVKAGDVISIREKAKKQGRIRESLDLAASIGLPQWVEVDASKMTGTFKSAPDRADVARDVNESMVVELYSR</sequence>
<evidence type="ECO:0000255" key="1">
    <source>
        <dbReference type="HAMAP-Rule" id="MF_01306"/>
    </source>
</evidence>
<evidence type="ECO:0000256" key="2">
    <source>
        <dbReference type="SAM" id="MobiDB-lite"/>
    </source>
</evidence>
<evidence type="ECO:0000305" key="3"/>
<accession>P0A4C7</accession>
<accession>P46774</accession>
<name>RS4_BORPA</name>
<proteinExistence type="inferred from homology"/>
<protein>
    <recommendedName>
        <fullName evidence="1">Small ribosomal subunit protein uS4</fullName>
    </recommendedName>
    <alternativeName>
        <fullName evidence="3">30S ribosomal protein S4</fullName>
    </alternativeName>
</protein>
<gene>
    <name evidence="1" type="primary">rpsD</name>
    <name type="ordered locus">BPP0056</name>
</gene>
<feature type="chain" id="PRO_0000132348" description="Small ribosomal subunit protein uS4">
    <location>
        <begin position="1"/>
        <end position="207"/>
    </location>
</feature>
<feature type="domain" description="S4 RNA-binding" evidence="1">
    <location>
        <begin position="97"/>
        <end position="162"/>
    </location>
</feature>
<feature type="region of interest" description="Disordered" evidence="2">
    <location>
        <begin position="31"/>
        <end position="51"/>
    </location>
</feature>
<organism>
    <name type="scientific">Bordetella parapertussis (strain 12822 / ATCC BAA-587 / NCTC 13253)</name>
    <dbReference type="NCBI Taxonomy" id="257311"/>
    <lineage>
        <taxon>Bacteria</taxon>
        <taxon>Pseudomonadati</taxon>
        <taxon>Pseudomonadota</taxon>
        <taxon>Betaproteobacteria</taxon>
        <taxon>Burkholderiales</taxon>
        <taxon>Alcaligenaceae</taxon>
        <taxon>Bordetella</taxon>
    </lineage>
</organism>
<dbReference type="EMBL" id="BX640423">
    <property type="protein sequence ID" value="CAE39797.1"/>
    <property type="molecule type" value="Genomic_DNA"/>
</dbReference>
<dbReference type="RefSeq" id="WP_003806931.1">
    <property type="nucleotide sequence ID" value="NC_002928.3"/>
</dbReference>
<dbReference type="SMR" id="P0A4C7"/>
<dbReference type="GeneID" id="93206286"/>
<dbReference type="KEGG" id="bpa:BPP0056"/>
<dbReference type="HOGENOM" id="CLU_092403_0_2_4"/>
<dbReference type="Proteomes" id="UP000001421">
    <property type="component" value="Chromosome"/>
</dbReference>
<dbReference type="GO" id="GO:0015935">
    <property type="term" value="C:small ribosomal subunit"/>
    <property type="evidence" value="ECO:0007669"/>
    <property type="project" value="InterPro"/>
</dbReference>
<dbReference type="GO" id="GO:0019843">
    <property type="term" value="F:rRNA binding"/>
    <property type="evidence" value="ECO:0007669"/>
    <property type="project" value="UniProtKB-UniRule"/>
</dbReference>
<dbReference type="GO" id="GO:0003735">
    <property type="term" value="F:structural constituent of ribosome"/>
    <property type="evidence" value="ECO:0007669"/>
    <property type="project" value="InterPro"/>
</dbReference>
<dbReference type="GO" id="GO:0042274">
    <property type="term" value="P:ribosomal small subunit biogenesis"/>
    <property type="evidence" value="ECO:0007669"/>
    <property type="project" value="TreeGrafter"/>
</dbReference>
<dbReference type="GO" id="GO:0006412">
    <property type="term" value="P:translation"/>
    <property type="evidence" value="ECO:0007669"/>
    <property type="project" value="UniProtKB-UniRule"/>
</dbReference>
<dbReference type="CDD" id="cd00165">
    <property type="entry name" value="S4"/>
    <property type="match status" value="1"/>
</dbReference>
<dbReference type="FunFam" id="1.10.1050.10:FF:000001">
    <property type="entry name" value="30S ribosomal protein S4"/>
    <property type="match status" value="1"/>
</dbReference>
<dbReference type="FunFam" id="3.10.290.10:FF:000001">
    <property type="entry name" value="30S ribosomal protein S4"/>
    <property type="match status" value="1"/>
</dbReference>
<dbReference type="Gene3D" id="1.10.1050.10">
    <property type="entry name" value="Ribosomal Protein S4 Delta 41, Chain A, domain 1"/>
    <property type="match status" value="1"/>
</dbReference>
<dbReference type="Gene3D" id="3.10.290.10">
    <property type="entry name" value="RNA-binding S4 domain"/>
    <property type="match status" value="1"/>
</dbReference>
<dbReference type="HAMAP" id="MF_01306_B">
    <property type="entry name" value="Ribosomal_uS4_B"/>
    <property type="match status" value="1"/>
</dbReference>
<dbReference type="InterPro" id="IPR022801">
    <property type="entry name" value="Ribosomal_uS4"/>
</dbReference>
<dbReference type="InterPro" id="IPR005709">
    <property type="entry name" value="Ribosomal_uS4_bac-type"/>
</dbReference>
<dbReference type="InterPro" id="IPR018079">
    <property type="entry name" value="Ribosomal_uS4_CS"/>
</dbReference>
<dbReference type="InterPro" id="IPR001912">
    <property type="entry name" value="Ribosomal_uS4_N"/>
</dbReference>
<dbReference type="InterPro" id="IPR002942">
    <property type="entry name" value="S4_RNA-bd"/>
</dbReference>
<dbReference type="InterPro" id="IPR036986">
    <property type="entry name" value="S4_RNA-bd_sf"/>
</dbReference>
<dbReference type="NCBIfam" id="NF003717">
    <property type="entry name" value="PRK05327.1"/>
    <property type="match status" value="1"/>
</dbReference>
<dbReference type="NCBIfam" id="TIGR01017">
    <property type="entry name" value="rpsD_bact"/>
    <property type="match status" value="1"/>
</dbReference>
<dbReference type="PANTHER" id="PTHR11831">
    <property type="entry name" value="30S 40S RIBOSOMAL PROTEIN"/>
    <property type="match status" value="1"/>
</dbReference>
<dbReference type="PANTHER" id="PTHR11831:SF4">
    <property type="entry name" value="SMALL RIBOSOMAL SUBUNIT PROTEIN US4M"/>
    <property type="match status" value="1"/>
</dbReference>
<dbReference type="Pfam" id="PF00163">
    <property type="entry name" value="Ribosomal_S4"/>
    <property type="match status" value="1"/>
</dbReference>
<dbReference type="Pfam" id="PF01479">
    <property type="entry name" value="S4"/>
    <property type="match status" value="1"/>
</dbReference>
<dbReference type="SMART" id="SM01390">
    <property type="entry name" value="Ribosomal_S4"/>
    <property type="match status" value="1"/>
</dbReference>
<dbReference type="SMART" id="SM00363">
    <property type="entry name" value="S4"/>
    <property type="match status" value="1"/>
</dbReference>
<dbReference type="SUPFAM" id="SSF55174">
    <property type="entry name" value="Alpha-L RNA-binding motif"/>
    <property type="match status" value="1"/>
</dbReference>
<dbReference type="PROSITE" id="PS00632">
    <property type="entry name" value="RIBOSOMAL_S4"/>
    <property type="match status" value="1"/>
</dbReference>
<dbReference type="PROSITE" id="PS50889">
    <property type="entry name" value="S4"/>
    <property type="match status" value="1"/>
</dbReference>
<reference key="1">
    <citation type="journal article" date="2003" name="Nat. Genet.">
        <title>Comparative analysis of the genome sequences of Bordetella pertussis, Bordetella parapertussis and Bordetella bronchiseptica.</title>
        <authorList>
            <person name="Parkhill J."/>
            <person name="Sebaihia M."/>
            <person name="Preston A."/>
            <person name="Murphy L.D."/>
            <person name="Thomson N.R."/>
            <person name="Harris D.E."/>
            <person name="Holden M.T.G."/>
            <person name="Churcher C.M."/>
            <person name="Bentley S.D."/>
            <person name="Mungall K.L."/>
            <person name="Cerdeno-Tarraga A.-M."/>
            <person name="Temple L."/>
            <person name="James K.D."/>
            <person name="Harris B."/>
            <person name="Quail M.A."/>
            <person name="Achtman M."/>
            <person name="Atkin R."/>
            <person name="Baker S."/>
            <person name="Basham D."/>
            <person name="Bason N."/>
            <person name="Cherevach I."/>
            <person name="Chillingworth T."/>
            <person name="Collins M."/>
            <person name="Cronin A."/>
            <person name="Davis P."/>
            <person name="Doggett J."/>
            <person name="Feltwell T."/>
            <person name="Goble A."/>
            <person name="Hamlin N."/>
            <person name="Hauser H."/>
            <person name="Holroyd S."/>
            <person name="Jagels K."/>
            <person name="Leather S."/>
            <person name="Moule S."/>
            <person name="Norberczak H."/>
            <person name="O'Neil S."/>
            <person name="Ormond D."/>
            <person name="Price C."/>
            <person name="Rabbinowitsch E."/>
            <person name="Rutter S."/>
            <person name="Sanders M."/>
            <person name="Saunders D."/>
            <person name="Seeger K."/>
            <person name="Sharp S."/>
            <person name="Simmonds M."/>
            <person name="Skelton J."/>
            <person name="Squares R."/>
            <person name="Squares S."/>
            <person name="Stevens K."/>
            <person name="Unwin L."/>
            <person name="Whitehead S."/>
            <person name="Barrell B.G."/>
            <person name="Maskell D.J."/>
        </authorList>
    </citation>
    <scope>NUCLEOTIDE SEQUENCE [LARGE SCALE GENOMIC DNA]</scope>
    <source>
        <strain>12822 / ATCC BAA-587 / NCTC 13253</strain>
    </source>
</reference>
<comment type="function">
    <text evidence="1">One of the primary rRNA binding proteins, it binds directly to 16S rRNA where it nucleates assembly of the body of the 30S subunit.</text>
</comment>
<comment type="function">
    <text evidence="1">With S5 and S12 plays an important role in translational accuracy.</text>
</comment>
<comment type="subunit">
    <text evidence="1">Part of the 30S ribosomal subunit. Contacts protein S5. The interaction surface between S4 and S5 is involved in control of translational fidelity.</text>
</comment>
<comment type="similarity">
    <text evidence="1">Belongs to the universal ribosomal protein uS4 family.</text>
</comment>